<organism>
    <name type="scientific">Aspergillus fumigatus (strain ATCC MYA-4609 / CBS 101355 / FGSC A1100 / Af293)</name>
    <name type="common">Neosartorya fumigata</name>
    <dbReference type="NCBI Taxonomy" id="330879"/>
    <lineage>
        <taxon>Eukaryota</taxon>
        <taxon>Fungi</taxon>
        <taxon>Dikarya</taxon>
        <taxon>Ascomycota</taxon>
        <taxon>Pezizomycotina</taxon>
        <taxon>Eurotiomycetes</taxon>
        <taxon>Eurotiomycetidae</taxon>
        <taxon>Eurotiales</taxon>
        <taxon>Aspergillaceae</taxon>
        <taxon>Aspergillus</taxon>
        <taxon>Aspergillus subgen. Fumigati</taxon>
    </lineage>
</organism>
<reference key="1">
    <citation type="journal article" date="2005" name="Nature">
        <title>Genomic sequence of the pathogenic and allergenic filamentous fungus Aspergillus fumigatus.</title>
        <authorList>
            <person name="Nierman W.C."/>
            <person name="Pain A."/>
            <person name="Anderson M.J."/>
            <person name="Wortman J.R."/>
            <person name="Kim H.S."/>
            <person name="Arroyo J."/>
            <person name="Berriman M."/>
            <person name="Abe K."/>
            <person name="Archer D.B."/>
            <person name="Bermejo C."/>
            <person name="Bennett J.W."/>
            <person name="Bowyer P."/>
            <person name="Chen D."/>
            <person name="Collins M."/>
            <person name="Coulsen R."/>
            <person name="Davies R."/>
            <person name="Dyer P.S."/>
            <person name="Farman M.L."/>
            <person name="Fedorova N."/>
            <person name="Fedorova N.D."/>
            <person name="Feldblyum T.V."/>
            <person name="Fischer R."/>
            <person name="Fosker N."/>
            <person name="Fraser A."/>
            <person name="Garcia J.L."/>
            <person name="Garcia M.J."/>
            <person name="Goble A."/>
            <person name="Goldman G.H."/>
            <person name="Gomi K."/>
            <person name="Griffith-Jones S."/>
            <person name="Gwilliam R."/>
            <person name="Haas B.J."/>
            <person name="Haas H."/>
            <person name="Harris D.E."/>
            <person name="Horiuchi H."/>
            <person name="Huang J."/>
            <person name="Humphray S."/>
            <person name="Jimenez J."/>
            <person name="Keller N."/>
            <person name="Khouri H."/>
            <person name="Kitamoto K."/>
            <person name="Kobayashi T."/>
            <person name="Konzack S."/>
            <person name="Kulkarni R."/>
            <person name="Kumagai T."/>
            <person name="Lafton A."/>
            <person name="Latge J.-P."/>
            <person name="Li W."/>
            <person name="Lord A."/>
            <person name="Lu C."/>
            <person name="Majoros W.H."/>
            <person name="May G.S."/>
            <person name="Miller B.L."/>
            <person name="Mohamoud Y."/>
            <person name="Molina M."/>
            <person name="Monod M."/>
            <person name="Mouyna I."/>
            <person name="Mulligan S."/>
            <person name="Murphy L.D."/>
            <person name="O'Neil S."/>
            <person name="Paulsen I."/>
            <person name="Penalva M.A."/>
            <person name="Pertea M."/>
            <person name="Price C."/>
            <person name="Pritchard B.L."/>
            <person name="Quail M.A."/>
            <person name="Rabbinowitsch E."/>
            <person name="Rawlins N."/>
            <person name="Rajandream M.A."/>
            <person name="Reichard U."/>
            <person name="Renauld H."/>
            <person name="Robson G.D."/>
            <person name="Rodriguez de Cordoba S."/>
            <person name="Rodriguez-Pena J.M."/>
            <person name="Ronning C.M."/>
            <person name="Rutter S."/>
            <person name="Salzberg S.L."/>
            <person name="Sanchez M."/>
            <person name="Sanchez-Ferrero J.C."/>
            <person name="Saunders D."/>
            <person name="Seeger K."/>
            <person name="Squares R."/>
            <person name="Squares S."/>
            <person name="Takeuchi M."/>
            <person name="Tekaia F."/>
            <person name="Turner G."/>
            <person name="Vazquez de Aldana C.R."/>
            <person name="Weidman J."/>
            <person name="White O."/>
            <person name="Woodward J.R."/>
            <person name="Yu J.-H."/>
            <person name="Fraser C.M."/>
            <person name="Galagan J.E."/>
            <person name="Asai K."/>
            <person name="Machida M."/>
            <person name="Hall N."/>
            <person name="Barrell B.G."/>
            <person name="Denning D.W."/>
        </authorList>
    </citation>
    <scope>NUCLEOTIDE SEQUENCE [LARGE SCALE GENOMIC DNA]</scope>
    <source>
        <strain>ATCC MYA-4609 / CBS 101355 / FGSC A1100 / Af293</strain>
    </source>
</reference>
<accession>Q4WCX4</accession>
<protein>
    <recommendedName>
        <fullName>Nascent polypeptide-associated complex subunit beta</fullName>
        <shortName>NAC-beta</shortName>
    </recommendedName>
    <alternativeName>
        <fullName>Beta-NAC</fullName>
    </alternativeName>
</protein>
<comment type="function">
    <text evidence="1">Component of the nascent polypeptide-associated complex (NAC), a dynamic component of the ribosomal exit tunnel, protecting the emerging polypeptides from interaction with other cytoplasmic proteins to ensure appropriate nascent protein targeting. The NAC complex also promotes mitochondrial protein import by enhancing productive ribosome interactions with the outer mitochondrial membrane and blocks the inappropriate interaction of ribosomes translating non-secretory nascent polypeptides with translocation sites in the membrane of the endoplasmic reticulum. EGD1 may act as a transcription factor that exert a negative effect on the expression of several genes that are transcribed by RNA polymerase II.</text>
</comment>
<comment type="subunit">
    <text evidence="1">Part of the nascent polypeptide-associated complex (NAC), consisting of egd2 and egd1. NAC associates with ribosomes via egd1 (By similarity).</text>
</comment>
<comment type="subcellular location">
    <subcellularLocation>
        <location evidence="1">Cytoplasm</location>
    </subcellularLocation>
    <subcellularLocation>
        <location evidence="1">Nucleus</location>
    </subcellularLocation>
    <text evidence="1">Predominantly cytoplasmic, may also transiently localize to the nucleus.</text>
</comment>
<comment type="similarity">
    <text evidence="4">Belongs to the NAC-beta family.</text>
</comment>
<gene>
    <name type="primary">egd1</name>
    <name type="ORF">AFUA_6G02750</name>
</gene>
<dbReference type="EMBL" id="AAHF01000012">
    <property type="protein sequence ID" value="EAL85764.1"/>
    <property type="molecule type" value="Genomic_DNA"/>
</dbReference>
<dbReference type="RefSeq" id="XP_747802.1">
    <property type="nucleotide sequence ID" value="XM_742709.1"/>
</dbReference>
<dbReference type="SMR" id="Q4WCX4"/>
<dbReference type="FunCoup" id="Q4WCX4">
    <property type="interactions" value="1221"/>
</dbReference>
<dbReference type="STRING" id="330879.Q4WCX4"/>
<dbReference type="EnsemblFungi" id="EAL85764">
    <property type="protein sequence ID" value="EAL85764"/>
    <property type="gene ID" value="AFUA_6G02750"/>
</dbReference>
<dbReference type="GeneID" id="3505164"/>
<dbReference type="KEGG" id="afm:AFUA_6G02750"/>
<dbReference type="VEuPathDB" id="FungiDB:Afu6g02750"/>
<dbReference type="eggNOG" id="KOG2240">
    <property type="taxonomic scope" value="Eukaryota"/>
</dbReference>
<dbReference type="HOGENOM" id="CLU_098726_2_0_1"/>
<dbReference type="InParanoid" id="Q4WCX4"/>
<dbReference type="OMA" id="AGDTYME"/>
<dbReference type="OrthoDB" id="8033832at2759"/>
<dbReference type="Proteomes" id="UP000002530">
    <property type="component" value="Chromosome 6"/>
</dbReference>
<dbReference type="GO" id="GO:0005829">
    <property type="term" value="C:cytosol"/>
    <property type="evidence" value="ECO:0000318"/>
    <property type="project" value="GO_Central"/>
</dbReference>
<dbReference type="GO" id="GO:0005854">
    <property type="term" value="C:nascent polypeptide-associated complex"/>
    <property type="evidence" value="ECO:0000318"/>
    <property type="project" value="GO_Central"/>
</dbReference>
<dbReference type="GO" id="GO:0005634">
    <property type="term" value="C:nucleus"/>
    <property type="evidence" value="ECO:0007669"/>
    <property type="project" value="UniProtKB-SubCell"/>
</dbReference>
<dbReference type="GO" id="GO:0015031">
    <property type="term" value="P:protein transport"/>
    <property type="evidence" value="ECO:0007669"/>
    <property type="project" value="UniProtKB-KW"/>
</dbReference>
<dbReference type="CDD" id="cd22055">
    <property type="entry name" value="NAC_BTF3"/>
    <property type="match status" value="1"/>
</dbReference>
<dbReference type="FunFam" id="2.20.70.30:FF:000003">
    <property type="entry name" value="Nascent polypeptide-associated complex subunit beta"/>
    <property type="match status" value="1"/>
</dbReference>
<dbReference type="Gene3D" id="2.20.70.30">
    <property type="entry name" value="Nascent polypeptide-associated complex domain"/>
    <property type="match status" value="1"/>
</dbReference>
<dbReference type="InterPro" id="IPR039370">
    <property type="entry name" value="BTF3"/>
</dbReference>
<dbReference type="InterPro" id="IPR038187">
    <property type="entry name" value="NAC_A/B_dom_sf"/>
</dbReference>
<dbReference type="InterPro" id="IPR002715">
    <property type="entry name" value="Nas_poly-pep-assoc_cplx_dom"/>
</dbReference>
<dbReference type="PANTHER" id="PTHR10351">
    <property type="entry name" value="TRANSCRIPTION FACTOR BTF3 FAMILY MEMBER"/>
    <property type="match status" value="1"/>
</dbReference>
<dbReference type="Pfam" id="PF01849">
    <property type="entry name" value="NAC"/>
    <property type="match status" value="1"/>
</dbReference>
<dbReference type="SMART" id="SM01407">
    <property type="entry name" value="NAC"/>
    <property type="match status" value="1"/>
</dbReference>
<dbReference type="PROSITE" id="PS51151">
    <property type="entry name" value="NAC_AB"/>
    <property type="match status" value="1"/>
</dbReference>
<feature type="chain" id="PRO_0000273501" description="Nascent polypeptide-associated complex subunit beta">
    <location>
        <begin position="1"/>
        <end position="186"/>
    </location>
</feature>
<feature type="domain" description="NAC-A/B" evidence="2">
    <location>
        <begin position="65"/>
        <end position="130"/>
    </location>
</feature>
<feature type="region of interest" description="Disordered" evidence="3">
    <location>
        <begin position="153"/>
        <end position="186"/>
    </location>
</feature>
<feature type="compositionally biased region" description="Acidic residues" evidence="3">
    <location>
        <begin position="167"/>
        <end position="186"/>
    </location>
</feature>
<evidence type="ECO:0000250" key="1"/>
<evidence type="ECO:0000255" key="2">
    <source>
        <dbReference type="PROSITE-ProRule" id="PRU00507"/>
    </source>
</evidence>
<evidence type="ECO:0000256" key="3">
    <source>
        <dbReference type="SAM" id="MobiDB-lite"/>
    </source>
</evidence>
<evidence type="ECO:0000305" key="4"/>
<keyword id="KW-0963">Cytoplasm</keyword>
<keyword id="KW-0539">Nucleus</keyword>
<keyword id="KW-0653">Protein transport</keyword>
<keyword id="KW-1185">Reference proteome</keyword>
<keyword id="KW-0678">Repressor</keyword>
<keyword id="KW-0804">Transcription</keyword>
<keyword id="KW-0805">Transcription regulation</keyword>
<keyword id="KW-0813">Transport</keyword>
<name>NACB_ASPFU</name>
<proteinExistence type="inferred from homology"/>
<sequence>MDQAKLARMQASVRIGTFCSFLWIFEVLESESVFSADGFQAHHLGNVIGKGTPRRKVKKVHKSSGADDKKLQTTLKKMNVQPIQAIEEVNMFKEDGNVIHFAAPKVHASVPSNTFALYGNGEEKELTELVPGILNQLGPDSLASLRKLAESYQNMQKQAGAEGKKDEDEDDIPDLVEGENFESNVE</sequence>